<dbReference type="EC" id="2.1.3.3" evidence="2"/>
<dbReference type="EMBL" id="BX572608">
    <property type="protein sequence ID" value="CAE30212.1"/>
    <property type="molecule type" value="Genomic_DNA"/>
</dbReference>
<dbReference type="SMR" id="Q6N0J0"/>
<dbReference type="STRING" id="258594.RPA4772"/>
<dbReference type="eggNOG" id="COG0078">
    <property type="taxonomic scope" value="Bacteria"/>
</dbReference>
<dbReference type="HOGENOM" id="CLU_043846_3_2_5"/>
<dbReference type="PhylomeDB" id="Q6N0J0"/>
<dbReference type="UniPathway" id="UPA00068">
    <property type="reaction ID" value="UER00112"/>
</dbReference>
<dbReference type="GO" id="GO:0005737">
    <property type="term" value="C:cytoplasm"/>
    <property type="evidence" value="ECO:0007669"/>
    <property type="project" value="UniProtKB-SubCell"/>
</dbReference>
<dbReference type="GO" id="GO:0016597">
    <property type="term" value="F:amino acid binding"/>
    <property type="evidence" value="ECO:0007669"/>
    <property type="project" value="InterPro"/>
</dbReference>
<dbReference type="GO" id="GO:0004585">
    <property type="term" value="F:ornithine carbamoyltransferase activity"/>
    <property type="evidence" value="ECO:0007669"/>
    <property type="project" value="UniProtKB-UniRule"/>
</dbReference>
<dbReference type="GO" id="GO:0042450">
    <property type="term" value="P:arginine biosynthetic process via ornithine"/>
    <property type="evidence" value="ECO:0007669"/>
    <property type="project" value="TreeGrafter"/>
</dbReference>
<dbReference type="GO" id="GO:0019240">
    <property type="term" value="P:citrulline biosynthetic process"/>
    <property type="evidence" value="ECO:0007669"/>
    <property type="project" value="TreeGrafter"/>
</dbReference>
<dbReference type="GO" id="GO:0006526">
    <property type="term" value="P:L-arginine biosynthetic process"/>
    <property type="evidence" value="ECO:0007669"/>
    <property type="project" value="UniProtKB-UniRule"/>
</dbReference>
<dbReference type="FunFam" id="3.40.50.1370:FF:000008">
    <property type="entry name" value="Ornithine carbamoyltransferase"/>
    <property type="match status" value="1"/>
</dbReference>
<dbReference type="Gene3D" id="3.40.50.1370">
    <property type="entry name" value="Aspartate/ornithine carbamoyltransferase"/>
    <property type="match status" value="2"/>
</dbReference>
<dbReference type="HAMAP" id="MF_01109">
    <property type="entry name" value="OTCase"/>
    <property type="match status" value="1"/>
</dbReference>
<dbReference type="InterPro" id="IPR006132">
    <property type="entry name" value="Asp/Orn_carbamoyltranf_P-bd"/>
</dbReference>
<dbReference type="InterPro" id="IPR006130">
    <property type="entry name" value="Asp/Orn_carbamoylTrfase"/>
</dbReference>
<dbReference type="InterPro" id="IPR036901">
    <property type="entry name" value="Asp/Orn_carbamoylTrfase_sf"/>
</dbReference>
<dbReference type="InterPro" id="IPR006131">
    <property type="entry name" value="Asp_carbamoyltransf_Asp/Orn-bd"/>
</dbReference>
<dbReference type="InterPro" id="IPR002292">
    <property type="entry name" value="Orn/put_carbamltrans"/>
</dbReference>
<dbReference type="InterPro" id="IPR024904">
    <property type="entry name" value="OTCase_ArgI"/>
</dbReference>
<dbReference type="NCBIfam" id="TIGR00658">
    <property type="entry name" value="orni_carb_tr"/>
    <property type="match status" value="1"/>
</dbReference>
<dbReference type="NCBIfam" id="NF001986">
    <property type="entry name" value="PRK00779.1"/>
    <property type="match status" value="1"/>
</dbReference>
<dbReference type="PANTHER" id="PTHR45753">
    <property type="entry name" value="ORNITHINE CARBAMOYLTRANSFERASE, MITOCHONDRIAL"/>
    <property type="match status" value="1"/>
</dbReference>
<dbReference type="PANTHER" id="PTHR45753:SF3">
    <property type="entry name" value="ORNITHINE TRANSCARBAMYLASE, MITOCHONDRIAL"/>
    <property type="match status" value="1"/>
</dbReference>
<dbReference type="Pfam" id="PF00185">
    <property type="entry name" value="OTCace"/>
    <property type="match status" value="1"/>
</dbReference>
<dbReference type="Pfam" id="PF02729">
    <property type="entry name" value="OTCace_N"/>
    <property type="match status" value="1"/>
</dbReference>
<dbReference type="PRINTS" id="PR00100">
    <property type="entry name" value="AOTCASE"/>
</dbReference>
<dbReference type="PRINTS" id="PR00102">
    <property type="entry name" value="OTCASE"/>
</dbReference>
<dbReference type="SUPFAM" id="SSF53671">
    <property type="entry name" value="Aspartate/ornithine carbamoyltransferase"/>
    <property type="match status" value="1"/>
</dbReference>
<dbReference type="PROSITE" id="PS00097">
    <property type="entry name" value="CARBAMOYLTRANSFERASE"/>
    <property type="match status" value="1"/>
</dbReference>
<proteinExistence type="inferred from homology"/>
<evidence type="ECO:0000250" key="1"/>
<evidence type="ECO:0000255" key="2">
    <source>
        <dbReference type="HAMAP-Rule" id="MF_01109"/>
    </source>
</evidence>
<protein>
    <recommendedName>
        <fullName evidence="2">Ornithine carbamoyltransferase</fullName>
        <shortName evidence="2">OTCase</shortName>
        <ecNumber evidence="2">2.1.3.3</ecNumber>
    </recommendedName>
</protein>
<feature type="chain" id="PRO_0000113001" description="Ornithine carbamoyltransferase">
    <location>
        <begin position="1"/>
        <end position="310"/>
    </location>
</feature>
<feature type="binding site" evidence="2">
    <location>
        <begin position="58"/>
        <end position="61"/>
    </location>
    <ligand>
        <name>carbamoyl phosphate</name>
        <dbReference type="ChEBI" id="CHEBI:58228"/>
    </ligand>
</feature>
<feature type="binding site" evidence="2">
    <location>
        <position position="85"/>
    </location>
    <ligand>
        <name>carbamoyl phosphate</name>
        <dbReference type="ChEBI" id="CHEBI:58228"/>
    </ligand>
</feature>
<feature type="binding site" evidence="2">
    <location>
        <position position="109"/>
    </location>
    <ligand>
        <name>carbamoyl phosphate</name>
        <dbReference type="ChEBI" id="CHEBI:58228"/>
    </ligand>
</feature>
<feature type="binding site" evidence="2">
    <location>
        <begin position="136"/>
        <end position="139"/>
    </location>
    <ligand>
        <name>carbamoyl phosphate</name>
        <dbReference type="ChEBI" id="CHEBI:58228"/>
    </ligand>
</feature>
<feature type="binding site" evidence="2">
    <location>
        <position position="167"/>
    </location>
    <ligand>
        <name>L-ornithine</name>
        <dbReference type="ChEBI" id="CHEBI:46911"/>
    </ligand>
</feature>
<feature type="binding site" evidence="2">
    <location>
        <position position="227"/>
    </location>
    <ligand>
        <name>L-ornithine</name>
        <dbReference type="ChEBI" id="CHEBI:46911"/>
    </ligand>
</feature>
<feature type="binding site" evidence="2">
    <location>
        <begin position="231"/>
        <end position="232"/>
    </location>
    <ligand>
        <name>L-ornithine</name>
        <dbReference type="ChEBI" id="CHEBI:46911"/>
    </ligand>
</feature>
<feature type="binding site" evidence="2">
    <location>
        <begin position="266"/>
        <end position="267"/>
    </location>
    <ligand>
        <name>carbamoyl phosphate</name>
        <dbReference type="ChEBI" id="CHEBI:58228"/>
    </ligand>
</feature>
<feature type="binding site" evidence="2">
    <location>
        <position position="294"/>
    </location>
    <ligand>
        <name>carbamoyl phosphate</name>
        <dbReference type="ChEBI" id="CHEBI:58228"/>
    </ligand>
</feature>
<accession>Q6N0J0</accession>
<comment type="function">
    <text evidence="1">Reversibly catalyzes the transfer of the carbamoyl group from carbamoyl phosphate (CP) to the N(epsilon) atom of ornithine (ORN) to produce L-citrulline.</text>
</comment>
<comment type="catalytic activity">
    <reaction evidence="2">
        <text>carbamoyl phosphate + L-ornithine = L-citrulline + phosphate + H(+)</text>
        <dbReference type="Rhea" id="RHEA:19513"/>
        <dbReference type="ChEBI" id="CHEBI:15378"/>
        <dbReference type="ChEBI" id="CHEBI:43474"/>
        <dbReference type="ChEBI" id="CHEBI:46911"/>
        <dbReference type="ChEBI" id="CHEBI:57743"/>
        <dbReference type="ChEBI" id="CHEBI:58228"/>
        <dbReference type="EC" id="2.1.3.3"/>
    </reaction>
</comment>
<comment type="pathway">
    <text evidence="2">Amino-acid biosynthesis; L-arginine biosynthesis; L-arginine from L-ornithine and carbamoyl phosphate: step 1/3.</text>
</comment>
<comment type="subcellular location">
    <subcellularLocation>
        <location evidence="2">Cytoplasm</location>
    </subcellularLocation>
</comment>
<comment type="similarity">
    <text evidence="2">Belongs to the aspartate/ornithine carbamoyltransferase superfamily. OTCase family.</text>
</comment>
<gene>
    <name evidence="2" type="primary">argF</name>
    <name type="ordered locus">RPA4772</name>
</gene>
<sequence length="310" mass="33943">MMSNNMPRHFLDLTELPTSELRNMLSAAVAMKAKRKANADGEKPLAGKTLAMIFDKPSTRTRVSFDVGMRQLGGESIMLTGAEMQLGRGETIADTARVLSRFVDIIMIRILNHEALLELAANATVPVINGLTRKSHPCQVMADVMTFEEHRGPIKGRTIAWTGDDNNVLASFAHAAQRFEFKLNIATPPQLSPSKALRDWIKASGAAITIGTDPEEAVRGADCVVTDTWVSMGDKDGEHRHNLLKPYQVNAKLMSLAHKDAIFMHCLPAHRGEEVTDEVIDGPQSVVFDEAENRLHAQKGILAWCLGAVA</sequence>
<organism>
    <name type="scientific">Rhodopseudomonas palustris (strain ATCC BAA-98 / CGA009)</name>
    <dbReference type="NCBI Taxonomy" id="258594"/>
    <lineage>
        <taxon>Bacteria</taxon>
        <taxon>Pseudomonadati</taxon>
        <taxon>Pseudomonadota</taxon>
        <taxon>Alphaproteobacteria</taxon>
        <taxon>Hyphomicrobiales</taxon>
        <taxon>Nitrobacteraceae</taxon>
        <taxon>Rhodopseudomonas</taxon>
    </lineage>
</organism>
<reference key="1">
    <citation type="journal article" date="2004" name="Nat. Biotechnol.">
        <title>Complete genome sequence of the metabolically versatile photosynthetic bacterium Rhodopseudomonas palustris.</title>
        <authorList>
            <person name="Larimer F.W."/>
            <person name="Chain P."/>
            <person name="Hauser L."/>
            <person name="Lamerdin J.E."/>
            <person name="Malfatti S."/>
            <person name="Do L."/>
            <person name="Land M.L."/>
            <person name="Pelletier D.A."/>
            <person name="Beatty J.T."/>
            <person name="Lang A.S."/>
            <person name="Tabita F.R."/>
            <person name="Gibson J.L."/>
            <person name="Hanson T.E."/>
            <person name="Bobst C."/>
            <person name="Torres y Torres J.L."/>
            <person name="Peres C."/>
            <person name="Harrison F.H."/>
            <person name="Gibson J."/>
            <person name="Harwood C.S."/>
        </authorList>
    </citation>
    <scope>NUCLEOTIDE SEQUENCE [LARGE SCALE GENOMIC DNA]</scope>
    <source>
        <strain>ATCC BAA-98 / CGA009</strain>
    </source>
</reference>
<name>OTC_RHOPA</name>
<keyword id="KW-0028">Amino-acid biosynthesis</keyword>
<keyword id="KW-0055">Arginine biosynthesis</keyword>
<keyword id="KW-0963">Cytoplasm</keyword>
<keyword id="KW-0808">Transferase</keyword>